<comment type="function">
    <text evidence="1">Acts as a chaperone.</text>
</comment>
<comment type="induction">
    <text evidence="1">By stress conditions e.g. heat shock.</text>
</comment>
<comment type="similarity">
    <text evidence="1">Belongs to the heat shock protein 70 family.</text>
</comment>
<reference key="1">
    <citation type="journal article" date="2004" name="Proc. Natl. Acad. Sci. U.S.A.">
        <title>Genomic analysis of Bacteroides fragilis reveals extensive DNA inversions regulating cell surface adaptation.</title>
        <authorList>
            <person name="Kuwahara T."/>
            <person name="Yamashita A."/>
            <person name="Hirakawa H."/>
            <person name="Nakayama H."/>
            <person name="Toh H."/>
            <person name="Okada N."/>
            <person name="Kuhara S."/>
            <person name="Hattori M."/>
            <person name="Hayashi T."/>
            <person name="Ohnishi Y."/>
        </authorList>
    </citation>
    <scope>NUCLEOTIDE SEQUENCE [LARGE SCALE GENOMIC DNA]</scope>
    <source>
        <strain>YCH46</strain>
    </source>
</reference>
<sequence>MGKIIGIDLGTTNSCVSVFEGNEPVVIANSEGKRTTPSIVAFVDGGERKVGDPAKRQAITNPTRTIFSIKRFMGENWDQVQKEIARVPYKVVKGDNNTPRVDIDGRLYTPQEISAMILQKMKKTAEDYLGQEVTEAVITVPAYFSDSQRQATKEAGQIAGLEVKRIVNEPTAAALAYGLDKAHKDMKIAVFDLGGGTFDISILEFGGGVFEVLSTNGDTHLGGDDFDQVIIDWLVQEFKNDEGADLTQDPMAMQRLKEAAEKAKIELSSSTSTEINLPYIMPVGGVPKHLVKTLTRAKFESLAHNLIQACLEPCKKAMQDAGLSNSDIDEVILVGGSSRIPAVQKLVEDFFGKTPSKGVNPDEVVAVGAAVQGAVLTDEIKGVVLLDVTPLSMGIETLGGVMTKLIDANTTIPARKSETFSTAADNQTEVTIHVLQGERPMAAQNKSIGQFNLTGIAPARRGVPQIEVTFDIDANGILKVSAKDKATGKEQAIRIEASSGLSKEEIEKMKAEAEANAEADKKEREKIDKLNQADSLIFQTETQLKELGDKLPADKKAPIEAALQKLKDAHKAQDMTTIDSAMAELNTAFQAASAEMYAQSGAQGGAQAGPDMNAGQSNAGQNNGKQDDNVQDADFEEVK</sequence>
<organism>
    <name type="scientific">Bacteroides fragilis (strain YCH46)</name>
    <dbReference type="NCBI Taxonomy" id="295405"/>
    <lineage>
        <taxon>Bacteria</taxon>
        <taxon>Pseudomonadati</taxon>
        <taxon>Bacteroidota</taxon>
        <taxon>Bacteroidia</taxon>
        <taxon>Bacteroidales</taxon>
        <taxon>Bacteroidaceae</taxon>
        <taxon>Bacteroides</taxon>
    </lineage>
</organism>
<evidence type="ECO:0000255" key="1">
    <source>
        <dbReference type="HAMAP-Rule" id="MF_00332"/>
    </source>
</evidence>
<evidence type="ECO:0000256" key="2">
    <source>
        <dbReference type="SAM" id="MobiDB-lite"/>
    </source>
</evidence>
<accession>Q64X01</accession>
<feature type="chain" id="PRO_0000225936" description="Chaperone protein DnaK">
    <location>
        <begin position="1"/>
        <end position="639"/>
    </location>
</feature>
<feature type="region of interest" description="Disordered" evidence="2">
    <location>
        <begin position="600"/>
        <end position="639"/>
    </location>
</feature>
<feature type="compositionally biased region" description="Low complexity" evidence="2">
    <location>
        <begin position="613"/>
        <end position="624"/>
    </location>
</feature>
<feature type="compositionally biased region" description="Acidic residues" evidence="2">
    <location>
        <begin position="629"/>
        <end position="639"/>
    </location>
</feature>
<feature type="modified residue" description="Phosphothreonine; by autocatalysis" evidence="1">
    <location>
        <position position="197"/>
    </location>
</feature>
<keyword id="KW-0067">ATP-binding</keyword>
<keyword id="KW-0143">Chaperone</keyword>
<keyword id="KW-0547">Nucleotide-binding</keyword>
<keyword id="KW-0597">Phosphoprotein</keyword>
<keyword id="KW-0346">Stress response</keyword>
<dbReference type="EMBL" id="AP006841">
    <property type="protein sequence ID" value="BAD47975.1"/>
    <property type="molecule type" value="Genomic_DNA"/>
</dbReference>
<dbReference type="RefSeq" id="WP_005785809.1">
    <property type="nucleotide sequence ID" value="NC_006347.1"/>
</dbReference>
<dbReference type="RefSeq" id="YP_098509.1">
    <property type="nucleotide sequence ID" value="NC_006347.1"/>
</dbReference>
<dbReference type="SMR" id="Q64X01"/>
<dbReference type="STRING" id="295405.BF1225"/>
<dbReference type="GeneID" id="60367790"/>
<dbReference type="KEGG" id="bfr:BF1225"/>
<dbReference type="PATRIC" id="fig|295405.11.peg.1212"/>
<dbReference type="HOGENOM" id="CLU_005965_2_1_10"/>
<dbReference type="OrthoDB" id="9766019at2"/>
<dbReference type="Proteomes" id="UP000002197">
    <property type="component" value="Chromosome"/>
</dbReference>
<dbReference type="GO" id="GO:0005524">
    <property type="term" value="F:ATP binding"/>
    <property type="evidence" value="ECO:0007669"/>
    <property type="project" value="UniProtKB-UniRule"/>
</dbReference>
<dbReference type="GO" id="GO:0140662">
    <property type="term" value="F:ATP-dependent protein folding chaperone"/>
    <property type="evidence" value="ECO:0007669"/>
    <property type="project" value="InterPro"/>
</dbReference>
<dbReference type="GO" id="GO:0051082">
    <property type="term" value="F:unfolded protein binding"/>
    <property type="evidence" value="ECO:0007669"/>
    <property type="project" value="InterPro"/>
</dbReference>
<dbReference type="CDD" id="cd10234">
    <property type="entry name" value="ASKHA_NBD_HSP70_DnaK-like"/>
    <property type="match status" value="1"/>
</dbReference>
<dbReference type="FunFam" id="2.60.34.10:FF:000014">
    <property type="entry name" value="Chaperone protein DnaK HSP70"/>
    <property type="match status" value="1"/>
</dbReference>
<dbReference type="FunFam" id="1.20.1270.10:FF:000001">
    <property type="entry name" value="Molecular chaperone DnaK"/>
    <property type="match status" value="1"/>
</dbReference>
<dbReference type="FunFam" id="3.30.420.40:FF:000004">
    <property type="entry name" value="Molecular chaperone DnaK"/>
    <property type="match status" value="1"/>
</dbReference>
<dbReference type="FunFam" id="3.90.640.10:FF:000003">
    <property type="entry name" value="Molecular chaperone DnaK"/>
    <property type="match status" value="1"/>
</dbReference>
<dbReference type="Gene3D" id="1.20.1270.10">
    <property type="match status" value="1"/>
</dbReference>
<dbReference type="Gene3D" id="3.30.420.40">
    <property type="match status" value="2"/>
</dbReference>
<dbReference type="Gene3D" id="3.90.640.10">
    <property type="entry name" value="Actin, Chain A, domain 4"/>
    <property type="match status" value="1"/>
</dbReference>
<dbReference type="Gene3D" id="2.60.34.10">
    <property type="entry name" value="Substrate Binding Domain Of DNAk, Chain A, domain 1"/>
    <property type="match status" value="1"/>
</dbReference>
<dbReference type="HAMAP" id="MF_00332">
    <property type="entry name" value="DnaK"/>
    <property type="match status" value="1"/>
</dbReference>
<dbReference type="InterPro" id="IPR043129">
    <property type="entry name" value="ATPase_NBD"/>
</dbReference>
<dbReference type="InterPro" id="IPR012725">
    <property type="entry name" value="Chaperone_DnaK"/>
</dbReference>
<dbReference type="InterPro" id="IPR018181">
    <property type="entry name" value="Heat_shock_70_CS"/>
</dbReference>
<dbReference type="InterPro" id="IPR029048">
    <property type="entry name" value="HSP70_C_sf"/>
</dbReference>
<dbReference type="InterPro" id="IPR029047">
    <property type="entry name" value="HSP70_peptide-bd_sf"/>
</dbReference>
<dbReference type="InterPro" id="IPR013126">
    <property type="entry name" value="Hsp_70_fam"/>
</dbReference>
<dbReference type="NCBIfam" id="NF001413">
    <property type="entry name" value="PRK00290.1"/>
    <property type="match status" value="1"/>
</dbReference>
<dbReference type="NCBIfam" id="NF003520">
    <property type="entry name" value="PRK05183.1"/>
    <property type="match status" value="1"/>
</dbReference>
<dbReference type="NCBIfam" id="TIGR02350">
    <property type="entry name" value="prok_dnaK"/>
    <property type="match status" value="1"/>
</dbReference>
<dbReference type="PANTHER" id="PTHR19375">
    <property type="entry name" value="HEAT SHOCK PROTEIN 70KDA"/>
    <property type="match status" value="1"/>
</dbReference>
<dbReference type="Pfam" id="PF00012">
    <property type="entry name" value="HSP70"/>
    <property type="match status" value="1"/>
</dbReference>
<dbReference type="PRINTS" id="PR00301">
    <property type="entry name" value="HEATSHOCK70"/>
</dbReference>
<dbReference type="SUPFAM" id="SSF53067">
    <property type="entry name" value="Actin-like ATPase domain"/>
    <property type="match status" value="2"/>
</dbReference>
<dbReference type="SUPFAM" id="SSF100934">
    <property type="entry name" value="Heat shock protein 70kD (HSP70), C-terminal subdomain"/>
    <property type="match status" value="1"/>
</dbReference>
<dbReference type="SUPFAM" id="SSF100920">
    <property type="entry name" value="Heat shock protein 70kD (HSP70), peptide-binding domain"/>
    <property type="match status" value="1"/>
</dbReference>
<dbReference type="PROSITE" id="PS00297">
    <property type="entry name" value="HSP70_1"/>
    <property type="match status" value="1"/>
</dbReference>
<dbReference type="PROSITE" id="PS00329">
    <property type="entry name" value="HSP70_2"/>
    <property type="match status" value="1"/>
</dbReference>
<dbReference type="PROSITE" id="PS01036">
    <property type="entry name" value="HSP70_3"/>
    <property type="match status" value="1"/>
</dbReference>
<protein>
    <recommendedName>
        <fullName evidence="1">Chaperone protein DnaK</fullName>
    </recommendedName>
    <alternativeName>
        <fullName evidence="1">HSP70</fullName>
    </alternativeName>
    <alternativeName>
        <fullName evidence="1">Heat shock 70 kDa protein</fullName>
    </alternativeName>
    <alternativeName>
        <fullName evidence="1">Heat shock protein 70</fullName>
    </alternativeName>
</protein>
<proteinExistence type="inferred from homology"/>
<gene>
    <name evidence="1" type="primary">dnaK</name>
    <name type="ordered locus">BF1225</name>
</gene>
<name>DNAK_BACFR</name>